<accession>Q0TJX8</accession>
<evidence type="ECO:0000255" key="1">
    <source>
        <dbReference type="HAMAP-Rule" id="MF_01253"/>
    </source>
</evidence>
<gene>
    <name evidence="1" type="primary">nei</name>
    <name type="ordered locus">ECP_0727</name>
</gene>
<feature type="initiator methionine" description="Removed" evidence="1">
    <location>
        <position position="1"/>
    </location>
</feature>
<feature type="chain" id="PRO_1000067202" description="Endonuclease 8">
    <location>
        <begin position="2"/>
        <end position="263"/>
    </location>
</feature>
<feature type="zinc finger region" description="FPG-type" evidence="1">
    <location>
        <begin position="229"/>
        <end position="263"/>
    </location>
</feature>
<feature type="active site" description="Schiff-base intermediate with DNA" evidence="1">
    <location>
        <position position="2"/>
    </location>
</feature>
<feature type="active site" description="Proton donor" evidence="1">
    <location>
        <position position="3"/>
    </location>
</feature>
<feature type="active site" description="Proton donor; for beta-elimination activity" evidence="1">
    <location>
        <position position="53"/>
    </location>
</feature>
<feature type="active site" description="Proton donor; for delta-elimination activity" evidence="1">
    <location>
        <position position="253"/>
    </location>
</feature>
<feature type="binding site" evidence="1">
    <location>
        <position position="70"/>
    </location>
    <ligand>
        <name>DNA</name>
        <dbReference type="ChEBI" id="CHEBI:16991"/>
    </ligand>
</feature>
<feature type="binding site" evidence="1">
    <location>
        <position position="125"/>
    </location>
    <ligand>
        <name>DNA</name>
        <dbReference type="ChEBI" id="CHEBI:16991"/>
    </ligand>
</feature>
<feature type="binding site" evidence="1">
    <location>
        <position position="169"/>
    </location>
    <ligand>
        <name>DNA</name>
        <dbReference type="ChEBI" id="CHEBI:16991"/>
    </ligand>
</feature>
<organism>
    <name type="scientific">Escherichia coli O6:K15:H31 (strain 536 / UPEC)</name>
    <dbReference type="NCBI Taxonomy" id="362663"/>
    <lineage>
        <taxon>Bacteria</taxon>
        <taxon>Pseudomonadati</taxon>
        <taxon>Pseudomonadota</taxon>
        <taxon>Gammaproteobacteria</taxon>
        <taxon>Enterobacterales</taxon>
        <taxon>Enterobacteriaceae</taxon>
        <taxon>Escherichia</taxon>
    </lineage>
</organism>
<keyword id="KW-0227">DNA damage</keyword>
<keyword id="KW-0234">DNA repair</keyword>
<keyword id="KW-0238">DNA-binding</keyword>
<keyword id="KW-0326">Glycosidase</keyword>
<keyword id="KW-0378">Hydrolase</keyword>
<keyword id="KW-0456">Lyase</keyword>
<keyword id="KW-0479">Metal-binding</keyword>
<keyword id="KW-0511">Multifunctional enzyme</keyword>
<keyword id="KW-0862">Zinc</keyword>
<keyword id="KW-0863">Zinc-finger</keyword>
<sequence>MPEGPEIRRAADNLEAAIKGKPLTDVWFAFPQLKSYQSRLIGQHVTHVETRGKALLTHFSNDLTLYSHNQLYGVWRVVDTGEEPQTTRVLRVKLQTADKTILLYSASDIEMLTPEQLTTHPFLQRVGPDVLDPNLTPEVVKERLLSPRFRNRQFAGLLLDQAFLAGLGNYLRVEILWQVGLTGNHKAKDLNAAQLDALAHALLDIPRLSYATRGQVDENKYHGALFRFKVFHRDGEPCERCGGIIEKTTLSSRPFYWCPGCQH</sequence>
<proteinExistence type="inferred from homology"/>
<name>END8_ECOL5</name>
<dbReference type="EC" id="3.2.2.-" evidence="1"/>
<dbReference type="EC" id="4.2.99.18" evidence="1"/>
<dbReference type="EMBL" id="CP000247">
    <property type="protein sequence ID" value="ABG68753.1"/>
    <property type="molecule type" value="Genomic_DNA"/>
</dbReference>
<dbReference type="RefSeq" id="WP_001114006.1">
    <property type="nucleotide sequence ID" value="NC_008253.1"/>
</dbReference>
<dbReference type="SMR" id="Q0TJX8"/>
<dbReference type="KEGG" id="ecp:ECP_0727"/>
<dbReference type="HOGENOM" id="CLU_038423_2_2_6"/>
<dbReference type="Proteomes" id="UP000009182">
    <property type="component" value="Chromosome"/>
</dbReference>
<dbReference type="GO" id="GO:0140078">
    <property type="term" value="F:class I DNA-(apurinic or apyrimidinic site) endonuclease activity"/>
    <property type="evidence" value="ECO:0007669"/>
    <property type="project" value="UniProtKB-EC"/>
</dbReference>
<dbReference type="GO" id="GO:0003684">
    <property type="term" value="F:damaged DNA binding"/>
    <property type="evidence" value="ECO:0007669"/>
    <property type="project" value="InterPro"/>
</dbReference>
<dbReference type="GO" id="GO:0000703">
    <property type="term" value="F:oxidized pyrimidine nucleobase lesion DNA N-glycosylase activity"/>
    <property type="evidence" value="ECO:0007669"/>
    <property type="project" value="UniProtKB-UniRule"/>
</dbReference>
<dbReference type="GO" id="GO:0008270">
    <property type="term" value="F:zinc ion binding"/>
    <property type="evidence" value="ECO:0007669"/>
    <property type="project" value="UniProtKB-UniRule"/>
</dbReference>
<dbReference type="GO" id="GO:0006284">
    <property type="term" value="P:base-excision repair"/>
    <property type="evidence" value="ECO:0007669"/>
    <property type="project" value="InterPro"/>
</dbReference>
<dbReference type="CDD" id="cd08965">
    <property type="entry name" value="EcNei-like_N"/>
    <property type="match status" value="1"/>
</dbReference>
<dbReference type="FunFam" id="1.10.8.50:FF:000005">
    <property type="entry name" value="Endonuclease 8"/>
    <property type="match status" value="1"/>
</dbReference>
<dbReference type="FunFam" id="3.20.190.10:FF:000002">
    <property type="entry name" value="Endonuclease 8"/>
    <property type="match status" value="1"/>
</dbReference>
<dbReference type="Gene3D" id="1.10.8.50">
    <property type="match status" value="1"/>
</dbReference>
<dbReference type="Gene3D" id="3.20.190.10">
    <property type="entry name" value="MutM-like, N-terminal"/>
    <property type="match status" value="1"/>
</dbReference>
<dbReference type="HAMAP" id="MF_01253">
    <property type="entry name" value="Endonuclease_8"/>
    <property type="match status" value="1"/>
</dbReference>
<dbReference type="InterPro" id="IPR015886">
    <property type="entry name" value="DNA_glyclase/AP_lyase_DNA-bd"/>
</dbReference>
<dbReference type="InterPro" id="IPR015887">
    <property type="entry name" value="DNA_glyclase_Znf_dom_DNA_BS"/>
</dbReference>
<dbReference type="InterPro" id="IPR044091">
    <property type="entry name" value="EcNei-like_N"/>
</dbReference>
<dbReference type="InterPro" id="IPR023713">
    <property type="entry name" value="Endonuclease-VIII"/>
</dbReference>
<dbReference type="InterPro" id="IPR012319">
    <property type="entry name" value="FPG_cat"/>
</dbReference>
<dbReference type="InterPro" id="IPR035937">
    <property type="entry name" value="MutM-like_N-ter"/>
</dbReference>
<dbReference type="InterPro" id="IPR010979">
    <property type="entry name" value="Ribosomal_uS13-like_H2TH"/>
</dbReference>
<dbReference type="InterPro" id="IPR000214">
    <property type="entry name" value="Znf_DNA_glyclase/AP_lyase"/>
</dbReference>
<dbReference type="InterPro" id="IPR010663">
    <property type="entry name" value="Znf_FPG/IleRS"/>
</dbReference>
<dbReference type="NCBIfam" id="NF007763">
    <property type="entry name" value="PRK10445.1"/>
    <property type="match status" value="1"/>
</dbReference>
<dbReference type="PANTHER" id="PTHR42697">
    <property type="entry name" value="ENDONUCLEASE 8"/>
    <property type="match status" value="1"/>
</dbReference>
<dbReference type="PANTHER" id="PTHR42697:SF1">
    <property type="entry name" value="ENDONUCLEASE 8"/>
    <property type="match status" value="1"/>
</dbReference>
<dbReference type="Pfam" id="PF01149">
    <property type="entry name" value="Fapy_DNA_glyco"/>
    <property type="match status" value="1"/>
</dbReference>
<dbReference type="Pfam" id="PF06831">
    <property type="entry name" value="H2TH"/>
    <property type="match status" value="1"/>
</dbReference>
<dbReference type="Pfam" id="PF06827">
    <property type="entry name" value="zf-FPG_IleRS"/>
    <property type="match status" value="1"/>
</dbReference>
<dbReference type="SMART" id="SM00898">
    <property type="entry name" value="Fapy_DNA_glyco"/>
    <property type="match status" value="1"/>
</dbReference>
<dbReference type="SMART" id="SM01232">
    <property type="entry name" value="H2TH"/>
    <property type="match status" value="1"/>
</dbReference>
<dbReference type="SUPFAM" id="SSF57716">
    <property type="entry name" value="Glucocorticoid receptor-like (DNA-binding domain)"/>
    <property type="match status" value="1"/>
</dbReference>
<dbReference type="SUPFAM" id="SSF81624">
    <property type="entry name" value="N-terminal domain of MutM-like DNA repair proteins"/>
    <property type="match status" value="1"/>
</dbReference>
<dbReference type="SUPFAM" id="SSF46946">
    <property type="entry name" value="S13-like H2TH domain"/>
    <property type="match status" value="1"/>
</dbReference>
<dbReference type="PROSITE" id="PS51068">
    <property type="entry name" value="FPG_CAT"/>
    <property type="match status" value="1"/>
</dbReference>
<dbReference type="PROSITE" id="PS01242">
    <property type="entry name" value="ZF_FPG_1"/>
    <property type="match status" value="1"/>
</dbReference>
<dbReference type="PROSITE" id="PS51066">
    <property type="entry name" value="ZF_FPG_2"/>
    <property type="match status" value="1"/>
</dbReference>
<comment type="function">
    <text evidence="1">Involved in base excision repair of DNA damaged by oxidation or by mutagenic agents. Acts as a DNA glycosylase that recognizes and removes damaged bases. Has a preference for oxidized pyrimidines, such as thymine glycol, 5,6-dihydrouracil and 5,6-dihydrothymine. Has AP (apurinic/apyrimidinic) lyase activity and introduces nicks in the DNA strand. Cleaves the DNA backbone by beta-delta elimination to generate a single-strand break at the site of the removed base with both 3'- and 5'-phosphates.</text>
</comment>
<comment type="catalytic activity">
    <reaction evidence="1">
        <text>2'-deoxyribonucleotide-(2'-deoxyribose 5'-phosphate)-2'-deoxyribonucleotide-DNA = a 3'-end 2'-deoxyribonucleotide-(2,3-dehydro-2,3-deoxyribose 5'-phosphate)-DNA + a 5'-end 5'-phospho-2'-deoxyribonucleoside-DNA + H(+)</text>
        <dbReference type="Rhea" id="RHEA:66592"/>
        <dbReference type="Rhea" id="RHEA-COMP:13180"/>
        <dbReference type="Rhea" id="RHEA-COMP:16897"/>
        <dbReference type="Rhea" id="RHEA-COMP:17067"/>
        <dbReference type="ChEBI" id="CHEBI:15378"/>
        <dbReference type="ChEBI" id="CHEBI:136412"/>
        <dbReference type="ChEBI" id="CHEBI:157695"/>
        <dbReference type="ChEBI" id="CHEBI:167181"/>
        <dbReference type="EC" id="4.2.99.18"/>
    </reaction>
</comment>
<comment type="cofactor">
    <cofactor evidence="1">
        <name>Zn(2+)</name>
        <dbReference type="ChEBI" id="CHEBI:29105"/>
    </cofactor>
    <text evidence="1">Binds 1 zinc ion per subunit.</text>
</comment>
<comment type="similarity">
    <text evidence="1">Belongs to the FPG family.</text>
</comment>
<reference key="1">
    <citation type="journal article" date="2006" name="Mol. Microbiol.">
        <title>Role of pathogenicity island-associated integrases in the genome plasticity of uropathogenic Escherichia coli strain 536.</title>
        <authorList>
            <person name="Hochhut B."/>
            <person name="Wilde C."/>
            <person name="Balling G."/>
            <person name="Middendorf B."/>
            <person name="Dobrindt U."/>
            <person name="Brzuszkiewicz E."/>
            <person name="Gottschalk G."/>
            <person name="Carniel E."/>
            <person name="Hacker J."/>
        </authorList>
    </citation>
    <scope>NUCLEOTIDE SEQUENCE [LARGE SCALE GENOMIC DNA]</scope>
    <source>
        <strain>536 / UPEC</strain>
    </source>
</reference>
<protein>
    <recommendedName>
        <fullName evidence="1">Endonuclease 8</fullName>
    </recommendedName>
    <alternativeName>
        <fullName evidence="1">DNA glycosylase/AP lyase Nei</fullName>
        <ecNumber evidence="1">3.2.2.-</ecNumber>
        <ecNumber evidence="1">4.2.99.18</ecNumber>
    </alternativeName>
    <alternativeName>
        <fullName evidence="1">DNA-(apurinic or apyrimidinic site) lyase Nei</fullName>
    </alternativeName>
    <alternativeName>
        <fullName evidence="1">Endonuclease VIII</fullName>
    </alternativeName>
</protein>